<dbReference type="EC" id="2.5.1.60"/>
<dbReference type="EMBL" id="U14132">
    <property type="protein sequence ID" value="AAA21386.1"/>
    <property type="status" value="ALT_SEQ"/>
    <property type="molecule type" value="Genomic_DNA"/>
</dbReference>
<dbReference type="EMBL" id="Z49307">
    <property type="protein sequence ID" value="CAA89323.1"/>
    <property type="status" value="ALT_SEQ"/>
    <property type="molecule type" value="Genomic_DNA"/>
</dbReference>
<dbReference type="EMBL" id="BK006943">
    <property type="protein sequence ID" value="DAA08767.1"/>
    <property type="molecule type" value="Genomic_DNA"/>
</dbReference>
<dbReference type="PIR" id="S48301">
    <property type="entry name" value="S48301"/>
</dbReference>
<dbReference type="RefSeq" id="NP_012503.2">
    <property type="nucleotide sequence ID" value="NM_001181465.1"/>
</dbReference>
<dbReference type="SMR" id="Q00618"/>
<dbReference type="BioGRID" id="33728">
    <property type="interactions" value="728"/>
</dbReference>
<dbReference type="ComplexPortal" id="CPX-1636">
    <property type="entry name" value="Protein geranylgeranyltransferase type II complex"/>
</dbReference>
<dbReference type="DIP" id="DIP-4994N"/>
<dbReference type="FunCoup" id="Q00618">
    <property type="interactions" value="150"/>
</dbReference>
<dbReference type="IntAct" id="Q00618">
    <property type="interactions" value="2"/>
</dbReference>
<dbReference type="STRING" id="4932.YJL031C"/>
<dbReference type="iPTMnet" id="Q00618"/>
<dbReference type="PaxDb" id="4932-YJL031C"/>
<dbReference type="PeptideAtlas" id="Q00618"/>
<dbReference type="EnsemblFungi" id="YJL031C_mRNA">
    <property type="protein sequence ID" value="YJL031C"/>
    <property type="gene ID" value="YJL031C"/>
</dbReference>
<dbReference type="GeneID" id="853421"/>
<dbReference type="KEGG" id="sce:YJL031C"/>
<dbReference type="AGR" id="SGD:S000003568"/>
<dbReference type="SGD" id="S000003568">
    <property type="gene designation" value="BET4"/>
</dbReference>
<dbReference type="VEuPathDB" id="FungiDB:YJL031C"/>
<dbReference type="eggNOG" id="KOG0529">
    <property type="taxonomic scope" value="Eukaryota"/>
</dbReference>
<dbReference type="GeneTree" id="ENSGT00550000075121"/>
<dbReference type="HOGENOM" id="CLU_031996_0_0_1"/>
<dbReference type="InParanoid" id="Q00618"/>
<dbReference type="OMA" id="TNAMFTD"/>
<dbReference type="OrthoDB" id="1658at2759"/>
<dbReference type="BioCyc" id="YEAST:MONOMER3O-3"/>
<dbReference type="Reactome" id="R-SCE-6803205">
    <property type="pathway name" value="TP53 regulates transcription of several additional cell death genes whose specific roles in p53-dependent apoptosis remain uncertain"/>
</dbReference>
<dbReference type="Reactome" id="R-SCE-8873719">
    <property type="pathway name" value="RAB geranylgeranylation"/>
</dbReference>
<dbReference type="BioGRID-ORCS" id="853421">
    <property type="hits" value="2 hits in 10 CRISPR screens"/>
</dbReference>
<dbReference type="PRO" id="PR:Q00618"/>
<dbReference type="Proteomes" id="UP000002311">
    <property type="component" value="Chromosome X"/>
</dbReference>
<dbReference type="RNAct" id="Q00618">
    <property type="molecule type" value="protein"/>
</dbReference>
<dbReference type="GO" id="GO:0005737">
    <property type="term" value="C:cytoplasm"/>
    <property type="evidence" value="ECO:0000318"/>
    <property type="project" value="GO_Central"/>
</dbReference>
<dbReference type="GO" id="GO:0005829">
    <property type="term" value="C:cytosol"/>
    <property type="evidence" value="ECO:0007005"/>
    <property type="project" value="SGD"/>
</dbReference>
<dbReference type="GO" id="GO:0005777">
    <property type="term" value="C:peroxisome"/>
    <property type="evidence" value="ECO:0000314"/>
    <property type="project" value="SGD"/>
</dbReference>
<dbReference type="GO" id="GO:0005968">
    <property type="term" value="C:Rab-protein geranylgeranyltransferase complex"/>
    <property type="evidence" value="ECO:0000314"/>
    <property type="project" value="SGD"/>
</dbReference>
<dbReference type="GO" id="GO:0004663">
    <property type="term" value="F:Rab geranylgeranyltransferase activity"/>
    <property type="evidence" value="ECO:0000314"/>
    <property type="project" value="SGD"/>
</dbReference>
<dbReference type="GO" id="GO:0031267">
    <property type="term" value="F:small GTPase binding"/>
    <property type="evidence" value="ECO:0000250"/>
    <property type="project" value="UniProtKB"/>
</dbReference>
<dbReference type="GO" id="GO:0006888">
    <property type="term" value="P:endoplasmic reticulum to Golgi vesicle-mediated transport"/>
    <property type="evidence" value="ECO:0000315"/>
    <property type="project" value="SGD"/>
</dbReference>
<dbReference type="GO" id="GO:0006612">
    <property type="term" value="P:protein targeting to membrane"/>
    <property type="evidence" value="ECO:0000315"/>
    <property type="project" value="SGD"/>
</dbReference>
<dbReference type="FunFam" id="1.25.40.120:FF:000016">
    <property type="entry name" value="Geranylgeranyltransferase type II alpha subunit"/>
    <property type="match status" value="1"/>
</dbReference>
<dbReference type="Gene3D" id="1.25.40.120">
    <property type="entry name" value="Protein prenylyltransferase"/>
    <property type="match status" value="1"/>
</dbReference>
<dbReference type="InterPro" id="IPR002088">
    <property type="entry name" value="Prenyl_trans_a"/>
</dbReference>
<dbReference type="PANTHER" id="PTHR11129:SF2">
    <property type="entry name" value="GERANYLGERANYL TRANSFERASE TYPE-2 SUBUNIT ALPHA"/>
    <property type="match status" value="1"/>
</dbReference>
<dbReference type="PANTHER" id="PTHR11129">
    <property type="entry name" value="PROTEIN FARNESYLTRANSFERASE ALPHA SUBUNIT/RAB GERANYLGERANYL TRANSFERASE ALPHA SUBUNIT"/>
    <property type="match status" value="1"/>
</dbReference>
<dbReference type="Pfam" id="PF01239">
    <property type="entry name" value="PPTA"/>
    <property type="match status" value="4"/>
</dbReference>
<dbReference type="SUPFAM" id="SSF48439">
    <property type="entry name" value="Protein prenylyltransferase"/>
    <property type="match status" value="1"/>
</dbReference>
<dbReference type="PROSITE" id="PS51147">
    <property type="entry name" value="PFTA"/>
    <property type="match status" value="5"/>
</dbReference>
<comment type="function">
    <text>Catalyzes the transfer of a geranyl-geranyl moiety from geranyl-geranyl pyrophosphate to proteins having the C-terminal -XCC or -XCXC, where both cysteines may become modified. Acts on YPT1 and SEC4.</text>
</comment>
<comment type="catalytic activity">
    <reaction>
        <text>geranylgeranyl diphosphate + L-cysteinyl-[protein] = S-geranylgeranyl-L-cysteinyl-[protein] + diphosphate</text>
        <dbReference type="Rhea" id="RHEA:21240"/>
        <dbReference type="Rhea" id="RHEA-COMP:10131"/>
        <dbReference type="Rhea" id="RHEA-COMP:11537"/>
        <dbReference type="ChEBI" id="CHEBI:29950"/>
        <dbReference type="ChEBI" id="CHEBI:33019"/>
        <dbReference type="ChEBI" id="CHEBI:57533"/>
        <dbReference type="ChEBI" id="CHEBI:86021"/>
        <dbReference type="EC" id="2.5.1.60"/>
    </reaction>
</comment>
<comment type="subunit">
    <text>Heterodimer of an alpha and a beta subunit.</text>
</comment>
<comment type="interaction">
    <interactant intactId="EBI-3573">
        <id>Q00618</id>
    </interactant>
    <interactant intactId="EBI-3559">
        <id>P20133</id>
        <label>BET2</label>
    </interactant>
    <organismsDiffer>false</organismsDiffer>
    <experiments>3</experiments>
</comment>
<comment type="similarity">
    <text evidence="1">Belongs to the protein prenyltransferase subunit alpha family.</text>
</comment>
<comment type="caution">
    <text evidence="2">Was originally thought to be MAD2.</text>
</comment>
<comment type="sequence caution" evidence="1">
    <conflict type="erroneous gene model prediction">
        <sequence resource="EMBL-CDS" id="AAA21386"/>
    </conflict>
</comment>
<comment type="sequence caution" evidence="1">
    <conflict type="erroneous gene model prediction">
        <sequence resource="EMBL-CDS" id="CAA89323"/>
    </conflict>
</comment>
<keyword id="KW-0637">Prenyltransferase</keyword>
<keyword id="KW-1185">Reference proteome</keyword>
<keyword id="KW-0677">Repeat</keyword>
<keyword id="KW-0808">Transferase</keyword>
<accession>Q00618</accession>
<accession>D6VWF1</accession>
<organism>
    <name type="scientific">Saccharomyces cerevisiae (strain ATCC 204508 / S288c)</name>
    <name type="common">Baker's yeast</name>
    <dbReference type="NCBI Taxonomy" id="559292"/>
    <lineage>
        <taxon>Eukaryota</taxon>
        <taxon>Fungi</taxon>
        <taxon>Dikarya</taxon>
        <taxon>Ascomycota</taxon>
        <taxon>Saccharomycotina</taxon>
        <taxon>Saccharomycetes</taxon>
        <taxon>Saccharomycetales</taxon>
        <taxon>Saccharomycetaceae</taxon>
        <taxon>Saccharomyces</taxon>
    </lineage>
</organism>
<sequence>MHGIKRKQWTKELLRQKRVQDEKKIYDYRSLTENVLNMRDEKIYSIEALKKTSELLEKNPEFNAIWNYRRDIIASLASELEIPFWDKELVFVMMLLKDYPKVYWIWNHRLWVLKHYPTSSPKVWQTELAVVNKLLEQDARNYHGWHYRRIVVGNIESITNKSLDKEEFEYTTIKINNNISNYSAWHQRVQIISRMFQKGEVGNQKEYIRTEISYIINAMFTDAEDQSVWFYIKWFIKNDIVCKTLDEQEYLKMLKDLRENILLINNDEIEFSGKQNIWCLKILLVLEDILEEKEALTERSSEQYLVQLIDADPLRKNRYLHLLEQHK</sequence>
<name>PGTA_YEAST</name>
<protein>
    <recommendedName>
        <fullName>Geranylgeranyl transferase type-2 subunit alpha</fullName>
        <ecNumber>2.5.1.60</ecNumber>
    </recommendedName>
    <alternativeName>
        <fullName>GGTase-II-alpha</fullName>
    </alternativeName>
    <alternativeName>
        <fullName>Geranylgeranyl transferase type II subunit alpha</fullName>
    </alternativeName>
    <alternativeName>
        <fullName>PGGT</fullName>
    </alternativeName>
    <alternativeName>
        <fullName>Type II protein geranyl-geranyltransferase subunit alpha</fullName>
    </alternativeName>
    <alternativeName>
        <fullName>YPT1/SEC4 proteins geranylgeranyltransferase subunit alpha</fullName>
    </alternativeName>
</protein>
<evidence type="ECO:0000305" key="1"/>
<evidence type="ECO:0000305" key="2">
    <source>
    </source>
</evidence>
<reference key="1">
    <citation type="journal article" date="1991" name="Cell">
        <title>Feedback control of mitosis in budding yeast.</title>
        <authorList>
            <person name="Li R."/>
            <person name="Murray A.W."/>
        </authorList>
    </citation>
    <scope>NUCLEOTIDE SEQUENCE [GENOMIC DNA]</scope>
</reference>
<reference key="2">
    <citation type="submission" date="1994-08" db="EMBL/GenBank/DDBJ databases">
        <authorList>
            <person name="Li R."/>
            <person name="Chen R.-H."/>
            <person name="Murray A.W."/>
        </authorList>
    </citation>
    <scope>SEQUENCE REVISION TO 171</scope>
</reference>
<reference key="3">
    <citation type="journal article" date="1996" name="EMBO J.">
        <title>Complete nucleotide sequence of Saccharomyces cerevisiae chromosome X.</title>
        <authorList>
            <person name="Galibert F."/>
            <person name="Alexandraki D."/>
            <person name="Baur A."/>
            <person name="Boles E."/>
            <person name="Chalwatzis N."/>
            <person name="Chuat J.-C."/>
            <person name="Coster F."/>
            <person name="Cziepluch C."/>
            <person name="de Haan M."/>
            <person name="Domdey H."/>
            <person name="Durand P."/>
            <person name="Entian K.-D."/>
            <person name="Gatius M."/>
            <person name="Goffeau A."/>
            <person name="Grivell L.A."/>
            <person name="Hennemann A."/>
            <person name="Herbert C.J."/>
            <person name="Heumann K."/>
            <person name="Hilger F."/>
            <person name="Hollenberg C.P."/>
            <person name="Huang M.-E."/>
            <person name="Jacq C."/>
            <person name="Jauniaux J.-C."/>
            <person name="Katsoulou C."/>
            <person name="Kirchrath L."/>
            <person name="Kleine K."/>
            <person name="Kordes E."/>
            <person name="Koetter P."/>
            <person name="Liebl S."/>
            <person name="Louis E.J."/>
            <person name="Manus V."/>
            <person name="Mewes H.-W."/>
            <person name="Miosga T."/>
            <person name="Obermaier B."/>
            <person name="Perea J."/>
            <person name="Pohl T.M."/>
            <person name="Portetelle D."/>
            <person name="Pujol A."/>
            <person name="Purnelle B."/>
            <person name="Ramezani Rad M."/>
            <person name="Rasmussen S.W."/>
            <person name="Rose M."/>
            <person name="Rossau R."/>
            <person name="Schaaff-Gerstenschlaeger I."/>
            <person name="Smits P.H.M."/>
            <person name="Scarcez T."/>
            <person name="Soriano N."/>
            <person name="To Van D."/>
            <person name="Tzermia M."/>
            <person name="Van Broekhoven A."/>
            <person name="Vandenbol M."/>
            <person name="Wedler H."/>
            <person name="von Wettstein D."/>
            <person name="Wambutt R."/>
            <person name="Zagulski M."/>
            <person name="Zollner A."/>
            <person name="Karpfinger-Hartl L."/>
        </authorList>
    </citation>
    <scope>NUCLEOTIDE SEQUENCE [LARGE SCALE GENOMIC DNA]</scope>
    <source>
        <strain>ATCC 204508 / S288c</strain>
    </source>
</reference>
<reference key="4">
    <citation type="journal article" date="2014" name="G3 (Bethesda)">
        <title>The reference genome sequence of Saccharomyces cerevisiae: Then and now.</title>
        <authorList>
            <person name="Engel S.R."/>
            <person name="Dietrich F.S."/>
            <person name="Fisk D.G."/>
            <person name="Binkley G."/>
            <person name="Balakrishnan R."/>
            <person name="Costanzo M.C."/>
            <person name="Dwight S.S."/>
            <person name="Hitz B.C."/>
            <person name="Karra K."/>
            <person name="Nash R.S."/>
            <person name="Weng S."/>
            <person name="Wong E.D."/>
            <person name="Lloyd P."/>
            <person name="Skrzypek M.S."/>
            <person name="Miyasato S.R."/>
            <person name="Simison M."/>
            <person name="Cherry J.M."/>
        </authorList>
    </citation>
    <scope>GENOME REANNOTATION</scope>
    <source>
        <strain>ATCC 204508 / S288c</strain>
    </source>
</reference>
<reference key="5">
    <citation type="journal article" date="2003" name="Genome Biol.">
        <title>Reinvestigation of the Saccharomyces cerevisiae genome annotation by comparison to the genome of a related fungus: Ashbya gossypii.</title>
        <authorList>
            <person name="Brachat S."/>
            <person name="Dietrich F.S."/>
            <person name="Voegeli S."/>
            <person name="Zhang Z."/>
            <person name="Stuart L."/>
            <person name="Lerch A."/>
            <person name="Gates K."/>
            <person name="Gaffney T.D."/>
            <person name="Philippsen P."/>
        </authorList>
    </citation>
    <scope>REVISION OF GENE MODEL</scope>
    <source>
        <strain>ATCC 204511 / S288c / AB972</strain>
    </source>
</reference>
<reference key="6">
    <citation type="journal article" date="1993" name="Nature">
        <title>The mitotic feedback control gene MAD2 encodes the alpha-subunit of a prenyltransferase.</title>
        <authorList>
            <person name="Li R."/>
            <person name="Havel C."/>
            <person name="Watson J.A."/>
            <person name="Murray A.W."/>
        </authorList>
    </citation>
    <scope>CHARACTERIZATION</scope>
</reference>
<reference key="7">
    <citation type="journal article" date="1994" name="Nature">
        <authorList>
            <person name="Li R."/>
            <person name="Havel C."/>
            <person name="Watson J.A."/>
            <person name="Murray A.W."/>
        </authorList>
    </citation>
    <scope>ERRATUM OF PUBMED:8232541</scope>
</reference>
<reference key="8">
    <citation type="journal article" date="1993" name="Nature">
        <title>Bet2p and Mad2p are components of a prenyltransferase that adds geranylgeranyl onto Ypt1p and Sec4p.</title>
        <authorList>
            <person name="Jiang Y."/>
            <person name="Rossi G."/>
            <person name="Ferro-Novick S."/>
        </authorList>
    </citation>
    <scope>CHARACTERIZATION</scope>
</reference>
<proteinExistence type="evidence at protein level"/>
<feature type="chain" id="PRO_0000119756" description="Geranylgeranyl transferase type-2 subunit alpha">
    <location>
        <begin position="1"/>
        <end position="327"/>
    </location>
</feature>
<feature type="repeat" description="PFTA 1">
    <location>
        <begin position="44"/>
        <end position="78"/>
    </location>
</feature>
<feature type="repeat" description="PFTA 2">
    <location>
        <begin position="84"/>
        <end position="118"/>
    </location>
</feature>
<feature type="repeat" description="PFTA 3">
    <location>
        <begin position="123"/>
        <end position="157"/>
    </location>
</feature>
<feature type="repeat" description="PFTA 4">
    <location>
        <begin position="163"/>
        <end position="197"/>
    </location>
</feature>
<feature type="repeat" description="PFTA 5">
    <location>
        <begin position="207"/>
        <end position="241"/>
    </location>
</feature>
<gene>
    <name type="primary">BET4</name>
    <name type="ordered locus">YJL031C</name>
    <name type="ORF">J1254</name>
</gene>